<gene>
    <name type="primary">RHBDD3</name>
    <name type="synonym">C22orf3</name>
</gene>
<evidence type="ECO:0000255" key="1"/>
<evidence type="ECO:0000305" key="2"/>
<feature type="chain" id="PRO_0000079569" description="Rhomboid domain-containing protein 3">
    <location>
        <begin position="1"/>
        <end position="386"/>
    </location>
</feature>
<feature type="transmembrane region" description="Helical" evidence="1">
    <location>
        <begin position="20"/>
        <end position="40"/>
    </location>
</feature>
<feature type="transmembrane region" description="Helical" evidence="1">
    <location>
        <begin position="58"/>
        <end position="78"/>
    </location>
</feature>
<feature type="transmembrane region" description="Helical" evidence="1">
    <location>
        <begin position="92"/>
        <end position="112"/>
    </location>
</feature>
<feature type="transmembrane region" description="Helical" evidence="1">
    <location>
        <begin position="141"/>
        <end position="161"/>
    </location>
</feature>
<feature type="transmembrane region" description="Helical" evidence="1">
    <location>
        <begin position="163"/>
        <end position="183"/>
    </location>
</feature>
<feature type="domain" description="UBA">
    <location>
        <begin position="324"/>
        <end position="362"/>
    </location>
</feature>
<feature type="sequence variant" id="VAR_021952" description="In dbSNP:rs2272902.">
    <original>T</original>
    <variation>M</variation>
    <location>
        <position position="86"/>
    </location>
</feature>
<feature type="sequence variant" id="VAR_051582" description="In dbSNP:rs2231397.">
    <original>H</original>
    <variation>R</variation>
    <location>
        <position position="227"/>
    </location>
</feature>
<protein>
    <recommendedName>
        <fullName>Rhomboid domain-containing protein 3</fullName>
    </recommendedName>
</protein>
<name>RHBD3_HUMAN</name>
<organism>
    <name type="scientific">Homo sapiens</name>
    <name type="common">Human</name>
    <dbReference type="NCBI Taxonomy" id="9606"/>
    <lineage>
        <taxon>Eukaryota</taxon>
        <taxon>Metazoa</taxon>
        <taxon>Chordata</taxon>
        <taxon>Craniata</taxon>
        <taxon>Vertebrata</taxon>
        <taxon>Euteleostomi</taxon>
        <taxon>Mammalia</taxon>
        <taxon>Eutheria</taxon>
        <taxon>Euarchontoglires</taxon>
        <taxon>Primates</taxon>
        <taxon>Haplorrhini</taxon>
        <taxon>Catarrhini</taxon>
        <taxon>Hominidae</taxon>
        <taxon>Homo</taxon>
    </lineage>
</organism>
<proteinExistence type="evidence at protein level"/>
<reference key="1">
    <citation type="journal article" date="2003" name="Genome Res.">
        <title>Reevaluating human gene annotation: a second-generation analysis of chromosome 22.</title>
        <authorList>
            <person name="Collins J.E."/>
            <person name="Goward M.E."/>
            <person name="Cole C.G."/>
            <person name="Smink L.J."/>
            <person name="Huckle E.J."/>
            <person name="Knowles S."/>
            <person name="Bye J.M."/>
            <person name="Beare D.M."/>
            <person name="Dunham I."/>
        </authorList>
    </citation>
    <scope>NUCLEOTIDE SEQUENCE [LARGE SCALE MRNA]</scope>
</reference>
<reference key="2">
    <citation type="submission" date="2004-06" db="EMBL/GenBank/DDBJ databases">
        <title>Cloning of human full open reading frames in Gateway(TM) system entry vector (pDONR201).</title>
        <authorList>
            <person name="Ebert L."/>
            <person name="Schick M."/>
            <person name="Neubert P."/>
            <person name="Schatten R."/>
            <person name="Henze S."/>
            <person name="Korn B."/>
        </authorList>
    </citation>
    <scope>NUCLEOTIDE SEQUENCE [LARGE SCALE MRNA]</scope>
</reference>
<reference key="3">
    <citation type="journal article" date="2004" name="Genome Biol.">
        <title>A genome annotation-driven approach to cloning the human ORFeome.</title>
        <authorList>
            <person name="Collins J.E."/>
            <person name="Wright C.L."/>
            <person name="Edwards C.A."/>
            <person name="Davis M.P."/>
            <person name="Grinham J.A."/>
            <person name="Cole C.G."/>
            <person name="Goward M.E."/>
            <person name="Aguado B."/>
            <person name="Mallya M."/>
            <person name="Mokrab Y."/>
            <person name="Huckle E.J."/>
            <person name="Beare D.M."/>
            <person name="Dunham I."/>
        </authorList>
    </citation>
    <scope>NUCLEOTIDE SEQUENCE [LARGE SCALE MRNA]</scope>
</reference>
<reference key="4">
    <citation type="journal article" date="1999" name="Nature">
        <title>The DNA sequence of human chromosome 22.</title>
        <authorList>
            <person name="Dunham I."/>
            <person name="Hunt A.R."/>
            <person name="Collins J.E."/>
            <person name="Bruskiewich R."/>
            <person name="Beare D.M."/>
            <person name="Clamp M."/>
            <person name="Smink L.J."/>
            <person name="Ainscough R."/>
            <person name="Almeida J.P."/>
            <person name="Babbage A.K."/>
            <person name="Bagguley C."/>
            <person name="Bailey J."/>
            <person name="Barlow K.F."/>
            <person name="Bates K.N."/>
            <person name="Beasley O.P."/>
            <person name="Bird C.P."/>
            <person name="Blakey S.E."/>
            <person name="Bridgeman A.M."/>
            <person name="Buck D."/>
            <person name="Burgess J."/>
            <person name="Burrill W.D."/>
            <person name="Burton J."/>
            <person name="Carder C."/>
            <person name="Carter N.P."/>
            <person name="Chen Y."/>
            <person name="Clark G."/>
            <person name="Clegg S.M."/>
            <person name="Cobley V.E."/>
            <person name="Cole C.G."/>
            <person name="Collier R.E."/>
            <person name="Connor R."/>
            <person name="Conroy D."/>
            <person name="Corby N.R."/>
            <person name="Coville G.J."/>
            <person name="Cox A.V."/>
            <person name="Davis J."/>
            <person name="Dawson E."/>
            <person name="Dhami P.D."/>
            <person name="Dockree C."/>
            <person name="Dodsworth S.J."/>
            <person name="Durbin R.M."/>
            <person name="Ellington A.G."/>
            <person name="Evans K.L."/>
            <person name="Fey J.M."/>
            <person name="Fleming K."/>
            <person name="French L."/>
            <person name="Garner A.A."/>
            <person name="Gilbert J.G.R."/>
            <person name="Goward M.E."/>
            <person name="Grafham D.V."/>
            <person name="Griffiths M.N.D."/>
            <person name="Hall C."/>
            <person name="Hall R.E."/>
            <person name="Hall-Tamlyn G."/>
            <person name="Heathcott R.W."/>
            <person name="Ho S."/>
            <person name="Holmes S."/>
            <person name="Hunt S.E."/>
            <person name="Jones M.C."/>
            <person name="Kershaw J."/>
            <person name="Kimberley A.M."/>
            <person name="King A."/>
            <person name="Laird G.K."/>
            <person name="Langford C.F."/>
            <person name="Leversha M.A."/>
            <person name="Lloyd C."/>
            <person name="Lloyd D.M."/>
            <person name="Martyn I.D."/>
            <person name="Mashreghi-Mohammadi M."/>
            <person name="Matthews L.H."/>
            <person name="Mccann O.T."/>
            <person name="Mcclay J."/>
            <person name="Mclaren S."/>
            <person name="McMurray A.A."/>
            <person name="Milne S.A."/>
            <person name="Mortimore B.J."/>
            <person name="Odell C.N."/>
            <person name="Pavitt R."/>
            <person name="Pearce A.V."/>
            <person name="Pearson D."/>
            <person name="Phillimore B.J.C.T."/>
            <person name="Phillips S.H."/>
            <person name="Plumb R.W."/>
            <person name="Ramsay H."/>
            <person name="Ramsey Y."/>
            <person name="Rogers L."/>
            <person name="Ross M.T."/>
            <person name="Scott C.E."/>
            <person name="Sehra H.K."/>
            <person name="Skuce C.D."/>
            <person name="Smalley S."/>
            <person name="Smith M.L."/>
            <person name="Soderlund C."/>
            <person name="Spragon L."/>
            <person name="Steward C.A."/>
            <person name="Sulston J.E."/>
            <person name="Swann R.M."/>
            <person name="Vaudin M."/>
            <person name="Wall M."/>
            <person name="Wallis J.M."/>
            <person name="Whiteley M.N."/>
            <person name="Willey D.L."/>
            <person name="Williams L."/>
            <person name="Williams S.A."/>
            <person name="Williamson H."/>
            <person name="Wilmer T.E."/>
            <person name="Wilming L."/>
            <person name="Wright C.L."/>
            <person name="Hubbard T."/>
            <person name="Bentley D.R."/>
            <person name="Beck S."/>
            <person name="Rogers J."/>
            <person name="Shimizu N."/>
            <person name="Minoshima S."/>
            <person name="Kawasaki K."/>
            <person name="Sasaki T."/>
            <person name="Asakawa S."/>
            <person name="Kudoh J."/>
            <person name="Shintani A."/>
            <person name="Shibuya K."/>
            <person name="Yoshizaki Y."/>
            <person name="Aoki N."/>
            <person name="Mitsuyama S."/>
            <person name="Roe B.A."/>
            <person name="Chen F."/>
            <person name="Chu L."/>
            <person name="Crabtree J."/>
            <person name="Deschamps S."/>
            <person name="Do A."/>
            <person name="Do T."/>
            <person name="Dorman A."/>
            <person name="Fang F."/>
            <person name="Fu Y."/>
            <person name="Hu P."/>
            <person name="Hua A."/>
            <person name="Kenton S."/>
            <person name="Lai H."/>
            <person name="Lao H.I."/>
            <person name="Lewis J."/>
            <person name="Lewis S."/>
            <person name="Lin S.-P."/>
            <person name="Loh P."/>
            <person name="Malaj E."/>
            <person name="Nguyen T."/>
            <person name="Pan H."/>
            <person name="Phan S."/>
            <person name="Qi S."/>
            <person name="Qian Y."/>
            <person name="Ray L."/>
            <person name="Ren Q."/>
            <person name="Shaull S."/>
            <person name="Sloan D."/>
            <person name="Song L."/>
            <person name="Wang Q."/>
            <person name="Wang Y."/>
            <person name="Wang Z."/>
            <person name="White J."/>
            <person name="Willingham D."/>
            <person name="Wu H."/>
            <person name="Yao Z."/>
            <person name="Zhan M."/>
            <person name="Zhang G."/>
            <person name="Chissoe S."/>
            <person name="Murray J."/>
            <person name="Miller N."/>
            <person name="Minx P."/>
            <person name="Fulton R."/>
            <person name="Johnson D."/>
            <person name="Bemis G."/>
            <person name="Bentley D."/>
            <person name="Bradshaw H."/>
            <person name="Bourne S."/>
            <person name="Cordes M."/>
            <person name="Du Z."/>
            <person name="Fulton L."/>
            <person name="Goela D."/>
            <person name="Graves T."/>
            <person name="Hawkins J."/>
            <person name="Hinds K."/>
            <person name="Kemp K."/>
            <person name="Latreille P."/>
            <person name="Layman D."/>
            <person name="Ozersky P."/>
            <person name="Rohlfing T."/>
            <person name="Scheet P."/>
            <person name="Walker C."/>
            <person name="Wamsley A."/>
            <person name="Wohldmann P."/>
            <person name="Pepin K."/>
            <person name="Nelson J."/>
            <person name="Korf I."/>
            <person name="Bedell J.A."/>
            <person name="Hillier L.W."/>
            <person name="Mardis E."/>
            <person name="Waterston R."/>
            <person name="Wilson R."/>
            <person name="Emanuel B.S."/>
            <person name="Shaikh T."/>
            <person name="Kurahashi H."/>
            <person name="Saitta S."/>
            <person name="Budarf M.L."/>
            <person name="McDermid H.E."/>
            <person name="Johnson A."/>
            <person name="Wong A.C.C."/>
            <person name="Morrow B.E."/>
            <person name="Edelmann L."/>
            <person name="Kim U.J."/>
            <person name="Shizuya H."/>
            <person name="Simon M.I."/>
            <person name="Dumanski J.P."/>
            <person name="Peyrard M."/>
            <person name="Kedra D."/>
            <person name="Seroussi E."/>
            <person name="Fransson I."/>
            <person name="Tapia I."/>
            <person name="Bruder C.E."/>
            <person name="O'Brien K.P."/>
            <person name="Wilkinson P."/>
            <person name="Bodenteich A."/>
            <person name="Hartman K."/>
            <person name="Hu X."/>
            <person name="Khan A.S."/>
            <person name="Lane L."/>
            <person name="Tilahun Y."/>
            <person name="Wright H."/>
        </authorList>
    </citation>
    <scope>NUCLEOTIDE SEQUENCE [LARGE SCALE GENOMIC DNA]</scope>
</reference>
<reference key="5">
    <citation type="journal article" date="2004" name="Genome Res.">
        <title>The status, quality, and expansion of the NIH full-length cDNA project: the Mammalian Gene Collection (MGC).</title>
        <authorList>
            <consortium name="The MGC Project Team"/>
        </authorList>
    </citation>
    <scope>NUCLEOTIDE SEQUENCE [LARGE SCALE MRNA]</scope>
    <source>
        <tissue>Brain</tissue>
    </source>
</reference>
<accession>Q9Y3P4</accession>
<accession>Q6I9X3</accession>
<accession>Q9UGQ7</accession>
<keyword id="KW-0472">Membrane</keyword>
<keyword id="KW-1267">Proteomics identification</keyword>
<keyword id="KW-1185">Reference proteome</keyword>
<keyword id="KW-0812">Transmembrane</keyword>
<keyword id="KW-1133">Transmembrane helix</keyword>
<sequence length="386" mass="40484">MHARGPHGQLSPALPLASSVLMLLMSTLWLVGAGPGLVLAPELLLDPWQVHRLLTHALGHTALPGLLLSLLLLPTVGWQQECHLGTLRFLHASALLALASGLLAVLLAGLGLSSAAGSCGYMPVHLAMLAGEGHRPRRPRGALPPWLSPWLLLALTPLLSSEPPFLQLLCGLLAGLAYAAGAFRWLEPSERRLQVLQEGVLCRTLAGCWPLRLLATPGSLAELPVTHPAGVRPPIPGPPYVASPDLWSHWEDSALPPPSLRPVQPTWEGSSEAGLDWAGASFSPGTPMWAALDEQMLQEGIQASLLDGPAQEPQSAPWLSKSSVSSLRLQQLERMGFPTEQAVVALAATGRVEGAVSLLVGGQVGTETLVTHGKGGPAHSEGPGPP</sequence>
<dbReference type="EMBL" id="AL050346">
    <property type="protein sequence ID" value="CAB43551.1"/>
    <property type="molecule type" value="mRNA"/>
</dbReference>
<dbReference type="EMBL" id="CR457382">
    <property type="protein sequence ID" value="CAG33663.1"/>
    <property type="molecule type" value="mRNA"/>
</dbReference>
<dbReference type="EMBL" id="CR456411">
    <property type="protein sequence ID" value="CAG30297.1"/>
    <property type="molecule type" value="mRNA"/>
</dbReference>
<dbReference type="EMBL" id="AL031186">
    <property type="status" value="NOT_ANNOTATED_CDS"/>
    <property type="molecule type" value="Genomic_DNA"/>
</dbReference>
<dbReference type="EMBL" id="BC002705">
    <property type="protein sequence ID" value="AAH02705.1"/>
    <property type="molecule type" value="mRNA"/>
</dbReference>
<dbReference type="CCDS" id="CCDS13850.1"/>
<dbReference type="RefSeq" id="NP_001316465.1">
    <property type="nucleotide sequence ID" value="NM_001329536.1"/>
</dbReference>
<dbReference type="RefSeq" id="NP_036397.1">
    <property type="nucleotide sequence ID" value="NM_012265.3"/>
</dbReference>
<dbReference type="BioGRID" id="117339">
    <property type="interactions" value="33"/>
</dbReference>
<dbReference type="FunCoup" id="Q9Y3P4">
    <property type="interactions" value="570"/>
</dbReference>
<dbReference type="IntAct" id="Q9Y3P4">
    <property type="interactions" value="19"/>
</dbReference>
<dbReference type="STRING" id="9606.ENSP00000216085"/>
<dbReference type="iPTMnet" id="Q9Y3P4"/>
<dbReference type="PhosphoSitePlus" id="Q9Y3P4"/>
<dbReference type="SwissPalm" id="Q9Y3P4"/>
<dbReference type="BioMuta" id="RHBDD3"/>
<dbReference type="DMDM" id="20177875"/>
<dbReference type="jPOST" id="Q9Y3P4"/>
<dbReference type="MassIVE" id="Q9Y3P4"/>
<dbReference type="PaxDb" id="9606-ENSP00000216085"/>
<dbReference type="PeptideAtlas" id="Q9Y3P4"/>
<dbReference type="ProteomicsDB" id="86052"/>
<dbReference type="Pumba" id="Q9Y3P4"/>
<dbReference type="TopDownProteomics" id="Q9Y3P4"/>
<dbReference type="Antibodypedia" id="45284">
    <property type="antibodies" value="79 antibodies from 22 providers"/>
</dbReference>
<dbReference type="DNASU" id="25807"/>
<dbReference type="Ensembl" id="ENST00000216085.12">
    <property type="protein sequence ID" value="ENSP00000216085.7"/>
    <property type="gene ID" value="ENSG00000100263.14"/>
</dbReference>
<dbReference type="GeneID" id="25807"/>
<dbReference type="KEGG" id="hsa:25807"/>
<dbReference type="MANE-Select" id="ENST00000216085.12">
    <property type="protein sequence ID" value="ENSP00000216085.7"/>
    <property type="RefSeq nucleotide sequence ID" value="NM_012265.3"/>
    <property type="RefSeq protein sequence ID" value="NP_036397.1"/>
</dbReference>
<dbReference type="UCSC" id="uc003aeq.2">
    <property type="organism name" value="human"/>
</dbReference>
<dbReference type="AGR" id="HGNC:1308"/>
<dbReference type="CTD" id="25807"/>
<dbReference type="DisGeNET" id="25807"/>
<dbReference type="GeneCards" id="RHBDD3"/>
<dbReference type="HGNC" id="HGNC:1308">
    <property type="gene designation" value="RHBDD3"/>
</dbReference>
<dbReference type="HPA" id="ENSG00000100263">
    <property type="expression patterns" value="Low tissue specificity"/>
</dbReference>
<dbReference type="neXtProt" id="NX_Q9Y3P4"/>
<dbReference type="OpenTargets" id="ENSG00000100263"/>
<dbReference type="PharmGKB" id="PA25887"/>
<dbReference type="VEuPathDB" id="HostDB:ENSG00000100263"/>
<dbReference type="eggNOG" id="KOG2632">
    <property type="taxonomic scope" value="Eukaryota"/>
</dbReference>
<dbReference type="GeneTree" id="ENSGT00390000013711"/>
<dbReference type="HOGENOM" id="CLU_060547_0_0_1"/>
<dbReference type="InParanoid" id="Q9Y3P4"/>
<dbReference type="OMA" id="CIGHNYH"/>
<dbReference type="OrthoDB" id="9908508at2759"/>
<dbReference type="PAN-GO" id="Q9Y3P4">
    <property type="GO annotations" value="1 GO annotation based on evolutionary models"/>
</dbReference>
<dbReference type="PhylomeDB" id="Q9Y3P4"/>
<dbReference type="TreeFam" id="TF332785"/>
<dbReference type="PathwayCommons" id="Q9Y3P4"/>
<dbReference type="SignaLink" id="Q9Y3P4"/>
<dbReference type="BioGRID-ORCS" id="25807">
    <property type="hits" value="20 hits in 1153 CRISPR screens"/>
</dbReference>
<dbReference type="ChiTaRS" id="RHBDD3">
    <property type="organism name" value="human"/>
</dbReference>
<dbReference type="GenomeRNAi" id="25807"/>
<dbReference type="Pharos" id="Q9Y3P4">
    <property type="development level" value="Tbio"/>
</dbReference>
<dbReference type="PRO" id="PR:Q9Y3P4"/>
<dbReference type="Proteomes" id="UP000005640">
    <property type="component" value="Chromosome 22"/>
</dbReference>
<dbReference type="RNAct" id="Q9Y3P4">
    <property type="molecule type" value="protein"/>
</dbReference>
<dbReference type="Bgee" id="ENSG00000100263">
    <property type="expression patterns" value="Expressed in pancreatic ductal cell and 189 other cell types or tissues"/>
</dbReference>
<dbReference type="ExpressionAtlas" id="Q9Y3P4">
    <property type="expression patterns" value="baseline and differential"/>
</dbReference>
<dbReference type="GO" id="GO:0016020">
    <property type="term" value="C:membrane"/>
    <property type="evidence" value="ECO:0007669"/>
    <property type="project" value="UniProtKB-SubCell"/>
</dbReference>
<dbReference type="GO" id="GO:0004252">
    <property type="term" value="F:serine-type endopeptidase activity"/>
    <property type="evidence" value="ECO:0000318"/>
    <property type="project" value="GO_Central"/>
</dbReference>
<dbReference type="GO" id="GO:0001889">
    <property type="term" value="P:liver development"/>
    <property type="evidence" value="ECO:0007669"/>
    <property type="project" value="Ensembl"/>
</dbReference>
<dbReference type="GO" id="GO:0000165">
    <property type="term" value="P:MAPK cascade"/>
    <property type="evidence" value="ECO:0007669"/>
    <property type="project" value="Ensembl"/>
</dbReference>
<dbReference type="GO" id="GO:0032815">
    <property type="term" value="P:negative regulation of natural killer cell activation"/>
    <property type="evidence" value="ECO:0007669"/>
    <property type="project" value="Ensembl"/>
</dbReference>
<dbReference type="GO" id="GO:0045732">
    <property type="term" value="P:positive regulation of protein catabolic process"/>
    <property type="evidence" value="ECO:0007669"/>
    <property type="project" value="Ensembl"/>
</dbReference>
<dbReference type="GO" id="GO:0002673">
    <property type="term" value="P:regulation of acute inflammatory response"/>
    <property type="evidence" value="ECO:0007669"/>
    <property type="project" value="Ensembl"/>
</dbReference>
<dbReference type="GO" id="GO:0050708">
    <property type="term" value="P:regulation of protein secretion"/>
    <property type="evidence" value="ECO:0007669"/>
    <property type="project" value="Ensembl"/>
</dbReference>
<dbReference type="GO" id="GO:0009410">
    <property type="term" value="P:response to xenobiotic stimulus"/>
    <property type="evidence" value="ECO:0007669"/>
    <property type="project" value="Ensembl"/>
</dbReference>
<dbReference type="CDD" id="cd14289">
    <property type="entry name" value="UBA_RHBD3"/>
    <property type="match status" value="1"/>
</dbReference>
<dbReference type="Gene3D" id="1.10.8.10">
    <property type="entry name" value="DNA helicase RuvA subunit, C-terminal domain"/>
    <property type="match status" value="1"/>
</dbReference>
<dbReference type="Gene3D" id="1.20.1540.10">
    <property type="entry name" value="Rhomboid-like"/>
    <property type="match status" value="1"/>
</dbReference>
<dbReference type="InterPro" id="IPR022764">
    <property type="entry name" value="Peptidase_S54_rhomboid_dom"/>
</dbReference>
<dbReference type="InterPro" id="IPR035952">
    <property type="entry name" value="Rhomboid-like_sf"/>
</dbReference>
<dbReference type="InterPro" id="IPR015940">
    <property type="entry name" value="UBA"/>
</dbReference>
<dbReference type="InterPro" id="IPR009060">
    <property type="entry name" value="UBA-like_sf"/>
</dbReference>
<dbReference type="PANTHER" id="PTHR43066:SF16">
    <property type="entry name" value="RHOMBOID DOMAIN-CONTAINING PROTEIN 3"/>
    <property type="match status" value="1"/>
</dbReference>
<dbReference type="PANTHER" id="PTHR43066">
    <property type="entry name" value="RHOMBOID-RELATED PROTEIN"/>
    <property type="match status" value="1"/>
</dbReference>
<dbReference type="Pfam" id="PF01694">
    <property type="entry name" value="Rhomboid"/>
    <property type="match status" value="1"/>
</dbReference>
<dbReference type="Pfam" id="PF00627">
    <property type="entry name" value="UBA"/>
    <property type="match status" value="1"/>
</dbReference>
<dbReference type="SUPFAM" id="SSF144091">
    <property type="entry name" value="Rhomboid-like"/>
    <property type="match status" value="1"/>
</dbReference>
<dbReference type="SUPFAM" id="SSF46934">
    <property type="entry name" value="UBA-like"/>
    <property type="match status" value="1"/>
</dbReference>
<comment type="subcellular location">
    <subcellularLocation>
        <location evidence="2">Membrane</location>
        <topology evidence="2">Multi-pass membrane protein</topology>
    </subcellularLocation>
</comment>